<name>NOD3B_XENTR</name>
<comment type="function">
    <text evidence="3 6">Exhibits mesoderm-dorsalizing activity and neural-inducing activity, but lacks mesoderm-inducing activity. Regulates the expression of specific mesodermal and neural genes. Induces convergent extension movements at the embryonic midline by activating the fgf signaling pathway to induce t/bra expression in the organizer region. Acts with wnt11 to induce Spemann organizer cells and induce axis formation (By similarity). The unprocessed protein antagonizes bmp-signaling.</text>
</comment>
<comment type="subunit">
    <text evidence="1 6">Monomer (By similarity). The propeptide region interacts with bmp4 in a non-covalent manner.</text>
</comment>
<comment type="subcellular location">
    <subcellularLocation>
        <location evidence="4">Secreted</location>
    </subcellularLocation>
</comment>
<comment type="tissue specificity">
    <text evidence="6">Expressed in the dorsal marginal region of late blastula, becoming restricted to the Spemann organizer at the early gastrula stage.</text>
</comment>
<comment type="developmental stage">
    <text evidence="6">First detected at the blastula stage (stage 8). Expression peaks through the mid-blastula (stage 8.5) to early gastrula (stage 10) and then decreases during gastrulation.</text>
</comment>
<comment type="domain">
    <text evidence="1">The propeptide region is both necessary and sufficient for bmp-inhibitory activity. The propeptide region and the N- and C-terminal thirds of the mature protein are necessary for neural induction activity. Although cleavage doesn't appear essential for activity, residues surrounding the cleavage site are necessary for activity (By similarity).</text>
</comment>
<comment type="similarity">
    <text evidence="5">Belongs to the TGF-beta family.</text>
</comment>
<keyword id="KW-0165">Cleavage on pair of basic residues</keyword>
<keyword id="KW-0217">Developmental protein</keyword>
<keyword id="KW-1015">Disulfide bond</keyword>
<keyword id="KW-0306">Gastrulation</keyword>
<keyword id="KW-0325">Glycoprotein</keyword>
<keyword id="KW-0339">Growth factor</keyword>
<keyword id="KW-1185">Reference proteome</keyword>
<keyword id="KW-0964">Secreted</keyword>
<keyword id="KW-0732">Signal</keyword>
<feature type="signal peptide" evidence="5">
    <location>
        <begin position="1"/>
        <end position="18"/>
    </location>
</feature>
<feature type="propeptide" id="PRO_0000338456" evidence="5">
    <location>
        <begin position="19"/>
        <end position="274"/>
    </location>
</feature>
<feature type="chain" id="PRO_0000338457" description="Nodal homolog 3-B" evidence="5">
    <location>
        <begin position="275"/>
        <end position="401"/>
    </location>
</feature>
<feature type="glycosylation site" description="N-linked (GlcNAc...) asparagine" evidence="5">
    <location>
        <position position="168"/>
    </location>
</feature>
<feature type="glycosylation site" description="N-linked (GlcNAc...) asparagine" evidence="5">
    <location>
        <position position="337"/>
    </location>
</feature>
<feature type="glycosylation site" description="N-linked (GlcNAc...) asparagine" evidence="5">
    <location>
        <position position="344"/>
    </location>
</feature>
<feature type="disulfide bond" evidence="2">
    <location>
        <begin position="299"/>
        <end position="365"/>
    </location>
</feature>
<feature type="disulfide bond" evidence="2">
    <location>
        <begin position="328"/>
        <end position="396"/>
    </location>
</feature>
<organism>
    <name type="scientific">Xenopus tropicalis</name>
    <name type="common">Western clawed frog</name>
    <name type="synonym">Silurana tropicalis</name>
    <dbReference type="NCBI Taxonomy" id="8364"/>
    <lineage>
        <taxon>Eukaryota</taxon>
        <taxon>Metazoa</taxon>
        <taxon>Chordata</taxon>
        <taxon>Craniata</taxon>
        <taxon>Vertebrata</taxon>
        <taxon>Euteleostomi</taxon>
        <taxon>Amphibia</taxon>
        <taxon>Batrachia</taxon>
        <taxon>Anura</taxon>
        <taxon>Pipoidea</taxon>
        <taxon>Pipidae</taxon>
        <taxon>Xenopodinae</taxon>
        <taxon>Xenopus</taxon>
        <taxon>Silurana</taxon>
    </lineage>
</organism>
<accession>Q800B9</accession>
<proteinExistence type="evidence at protein level"/>
<protein>
    <recommendedName>
        <fullName>Nodal homolog 3-B</fullName>
    </recommendedName>
    <alternativeName>
        <fullName>Nodal-related protein 3-B</fullName>
    </alternativeName>
    <alternativeName>
        <fullName>Xtnr3-B</fullName>
    </alternativeName>
</protein>
<reference evidence="7 8" key="1">
    <citation type="journal article" date="2004" name="Dev. Biol.">
        <title>Xenopus tropicalis nodal-related gene 3 regulates BMP signaling: an essential role for the pro-region.</title>
        <authorList>
            <person name="Haramoto Y."/>
            <person name="Tanegashima K."/>
            <person name="Onuma Y."/>
            <person name="Takahashi S."/>
            <person name="Sekizaki H."/>
            <person name="Asashima M."/>
        </authorList>
    </citation>
    <scope>NUCLEOTIDE SEQUENCE [MRNA]</scope>
    <scope>FUNCTION</scope>
    <scope>INTERACTION WITH BMP4</scope>
    <scope>TISSUE SPECIFICITY</scope>
    <scope>DEVELOPMENTAL STAGE</scope>
    <source>
        <tissue evidence="6">Gastrula</tissue>
    </source>
</reference>
<evidence type="ECO:0000250" key="1"/>
<evidence type="ECO:0000250" key="2">
    <source>
        <dbReference type="UniProtKB" id="P43021"/>
    </source>
</evidence>
<evidence type="ECO:0000250" key="3">
    <source>
        <dbReference type="UniProtKB" id="Q91609"/>
    </source>
</evidence>
<evidence type="ECO:0000250" key="4">
    <source>
        <dbReference type="UniProtKB" id="Q91620"/>
    </source>
</evidence>
<evidence type="ECO:0000255" key="5"/>
<evidence type="ECO:0000269" key="6">
    <source>
    </source>
</evidence>
<evidence type="ECO:0000305" key="7"/>
<evidence type="ECO:0000312" key="8">
    <source>
        <dbReference type="EMBL" id="BAC75531.1"/>
    </source>
</evidence>
<gene>
    <name evidence="4" type="primary">nodal3-B</name>
    <name evidence="8" type="synonym">nr3-B</name>
</gene>
<dbReference type="EMBL" id="AB093328">
    <property type="protein sequence ID" value="BAC75531.1"/>
    <property type="molecule type" value="mRNA"/>
</dbReference>
<dbReference type="RefSeq" id="NP_988864.1">
    <property type="nucleotide sequence ID" value="NM_203533.1"/>
</dbReference>
<dbReference type="GlyCosmos" id="Q800B9">
    <property type="glycosylation" value="3 sites, No reported glycans"/>
</dbReference>
<dbReference type="GeneID" id="394458"/>
<dbReference type="KEGG" id="xtr:394458"/>
<dbReference type="AGR" id="Xenbase:XB-GENE-5964399"/>
<dbReference type="CTD" id="394458"/>
<dbReference type="Xenbase" id="XB-GENE-5964399">
    <property type="gene designation" value="nodal3"/>
</dbReference>
<dbReference type="InParanoid" id="Q800B9"/>
<dbReference type="OMA" id="KEKTRMD"/>
<dbReference type="OrthoDB" id="5949851at2759"/>
<dbReference type="Proteomes" id="UP000008143">
    <property type="component" value="Chromosome 3"/>
</dbReference>
<dbReference type="GO" id="GO:0005576">
    <property type="term" value="C:extracellular region"/>
    <property type="evidence" value="ECO:0007669"/>
    <property type="project" value="UniProtKB-SubCell"/>
</dbReference>
<dbReference type="GO" id="GO:0008083">
    <property type="term" value="F:growth factor activity"/>
    <property type="evidence" value="ECO:0007669"/>
    <property type="project" value="UniProtKB-KW"/>
</dbReference>
<dbReference type="GO" id="GO:0007369">
    <property type="term" value="P:gastrulation"/>
    <property type="evidence" value="ECO:0007669"/>
    <property type="project" value="UniProtKB-KW"/>
</dbReference>
<dbReference type="FunFam" id="2.10.90.10:FF:000026">
    <property type="entry name" value="Nodal homolog 3-A"/>
    <property type="match status" value="1"/>
</dbReference>
<dbReference type="Gene3D" id="2.60.120.970">
    <property type="match status" value="1"/>
</dbReference>
<dbReference type="Gene3D" id="2.10.90.10">
    <property type="entry name" value="Cystine-knot cytokines"/>
    <property type="match status" value="1"/>
</dbReference>
<dbReference type="InterPro" id="IPR029034">
    <property type="entry name" value="Cystine-knot_cytokine"/>
</dbReference>
<dbReference type="InterPro" id="IPR001839">
    <property type="entry name" value="TGF-b_C"/>
</dbReference>
<dbReference type="InterPro" id="IPR001111">
    <property type="entry name" value="TGF-b_propeptide"/>
</dbReference>
<dbReference type="InterPro" id="IPR015615">
    <property type="entry name" value="TGF-beta-rel"/>
</dbReference>
<dbReference type="PANTHER" id="PTHR11848:SF295">
    <property type="entry name" value="NODAL HOMOLOG 3-C"/>
    <property type="match status" value="1"/>
</dbReference>
<dbReference type="PANTHER" id="PTHR11848">
    <property type="entry name" value="TGF-BETA FAMILY"/>
    <property type="match status" value="1"/>
</dbReference>
<dbReference type="Pfam" id="PF00019">
    <property type="entry name" value="TGF_beta"/>
    <property type="match status" value="1"/>
</dbReference>
<dbReference type="Pfam" id="PF00688">
    <property type="entry name" value="TGFb_propeptide"/>
    <property type="match status" value="1"/>
</dbReference>
<dbReference type="SMART" id="SM00204">
    <property type="entry name" value="TGFB"/>
    <property type="match status" value="1"/>
</dbReference>
<dbReference type="SUPFAM" id="SSF57501">
    <property type="entry name" value="Cystine-knot cytokines"/>
    <property type="match status" value="1"/>
</dbReference>
<dbReference type="PROSITE" id="PS51362">
    <property type="entry name" value="TGF_BETA_2"/>
    <property type="match status" value="1"/>
</dbReference>
<sequence length="401" mass="45849">MAFLSLFLCLVFSSPLMAMPPALQGRKAISPASILKGPSTDNGARDFHGRKFPHFMMQLYQNIISRRDKDLSNLEHPTLQESDTVQSFIAKSYTTVGNHWTLFFDMSSISTNNELKLAELRICLPSFGKSHSVTVEIYHTKDTKEKLFMGSFKTKISSALDADCKVFNLTMVLHNYLIRGKRLIKDEYIQAKGLLLRDLEKSAAEKGAENVDTLKQDKHHVSDFAAERIILVVFAKERSQAKPDPPSLGKQLFPLKYGMADNANKVNGFRRLRRNKKEKTRMDVGTTPPKPVEEIKPKCRKVDMFVDFQKIGWGSWIVYPKAYNAYRCESACAVPLNETDDATNYSYIKSLLPLSDTERRECPSCVPVKMRSMSMLYYENEEFILRHHEEMIVEECGFKDI</sequence>